<keyword id="KW-0001">2Fe-2S</keyword>
<keyword id="KW-0963">Cytoplasm</keyword>
<keyword id="KW-0903">Direct protein sequencing</keyword>
<keyword id="KW-0274">FAD</keyword>
<keyword id="KW-0285">Flavoprotein</keyword>
<keyword id="KW-0408">Iron</keyword>
<keyword id="KW-0411">Iron-sulfur</keyword>
<keyword id="KW-0479">Metal-binding</keyword>
<keyword id="KW-0500">Molybdenum</keyword>
<keyword id="KW-0520">NAD</keyword>
<keyword id="KW-0560">Oxidoreductase</keyword>
<keyword id="KW-0576">Peroxisome</keyword>
<keyword id="KW-1185">Reference proteome</keyword>
<feature type="chain" id="PRO_0000166083" description="Xanthine dehydrogenase/oxidase">
    <location>
        <begin position="1"/>
        <end position="1358"/>
    </location>
</feature>
<feature type="domain" description="2Fe-2S ferredoxin-type" evidence="4">
    <location>
        <begin position="8"/>
        <end position="95"/>
    </location>
</feature>
<feature type="domain" description="FAD-binding PCMH-type" evidence="5">
    <location>
        <begin position="255"/>
        <end position="440"/>
    </location>
</feature>
<feature type="active site" description="Proton acceptor" evidence="1">
    <location>
        <position position="1290"/>
    </location>
</feature>
<feature type="binding site" evidence="2">
    <location>
        <position position="47"/>
    </location>
    <ligand>
        <name>[2Fe-2S] cluster</name>
        <dbReference type="ChEBI" id="CHEBI:190135"/>
        <label>1</label>
    </ligand>
</feature>
<feature type="binding site" evidence="2">
    <location>
        <position position="52"/>
    </location>
    <ligand>
        <name>[2Fe-2S] cluster</name>
        <dbReference type="ChEBI" id="CHEBI:190135"/>
        <label>1</label>
    </ligand>
</feature>
<feature type="binding site" evidence="2">
    <location>
        <position position="55"/>
    </location>
    <ligand>
        <name>[2Fe-2S] cluster</name>
        <dbReference type="ChEBI" id="CHEBI:190135"/>
        <label>1</label>
    </ligand>
</feature>
<feature type="binding site" evidence="2">
    <location>
        <position position="77"/>
    </location>
    <ligand>
        <name>[2Fe-2S] cluster</name>
        <dbReference type="ChEBI" id="CHEBI:190135"/>
        <label>1</label>
    </ligand>
</feature>
<feature type="binding site" evidence="2">
    <location>
        <position position="117"/>
    </location>
    <ligand>
        <name>[2Fe-2S] cluster</name>
        <dbReference type="ChEBI" id="CHEBI:190135"/>
        <label>2</label>
    </ligand>
</feature>
<feature type="binding site" evidence="2">
    <location>
        <position position="120"/>
    </location>
    <ligand>
        <name>[2Fe-2S] cluster</name>
        <dbReference type="ChEBI" id="CHEBI:190135"/>
        <label>2</label>
    </ligand>
</feature>
<feature type="binding site" evidence="2">
    <location>
        <position position="152"/>
    </location>
    <ligand>
        <name>[2Fe-2S] cluster</name>
        <dbReference type="ChEBI" id="CHEBI:190135"/>
        <label>2</label>
    </ligand>
</feature>
<feature type="binding site" evidence="2">
    <location>
        <position position="154"/>
    </location>
    <ligand>
        <name>[2Fe-2S] cluster</name>
        <dbReference type="ChEBI" id="CHEBI:190135"/>
        <label>2</label>
    </ligand>
</feature>
<feature type="binding site" evidence="1">
    <location>
        <begin position="283"/>
        <end position="290"/>
    </location>
    <ligand>
        <name>FAD</name>
        <dbReference type="ChEBI" id="CHEBI:57692"/>
    </ligand>
</feature>
<feature type="binding site" evidence="1">
    <location>
        <position position="363"/>
    </location>
    <ligand>
        <name>FAD</name>
        <dbReference type="ChEBI" id="CHEBI:57692"/>
    </ligand>
</feature>
<feature type="binding site" evidence="1">
    <location>
        <begin position="373"/>
        <end position="377"/>
    </location>
    <ligand>
        <name>FAD</name>
        <dbReference type="ChEBI" id="CHEBI:57692"/>
    </ligand>
</feature>
<feature type="binding site" evidence="1">
    <location>
        <position position="386"/>
    </location>
    <ligand>
        <name>FAD</name>
        <dbReference type="ChEBI" id="CHEBI:57692"/>
    </ligand>
</feature>
<feature type="binding site" evidence="1">
    <location>
        <position position="430"/>
    </location>
    <ligand>
        <name>FAD</name>
        <dbReference type="ChEBI" id="CHEBI:57692"/>
    </ligand>
</feature>
<feature type="binding site" evidence="1">
    <location>
        <position position="448"/>
    </location>
    <ligand>
        <name>FAD</name>
        <dbReference type="ChEBI" id="CHEBI:57692"/>
    </ligand>
</feature>
<feature type="binding site" evidence="1">
    <location>
        <position position="796"/>
    </location>
    <ligand>
        <name>Mo-molybdopterin</name>
        <dbReference type="ChEBI" id="CHEBI:71302"/>
    </ligand>
    <ligandPart>
        <name>Mo</name>
        <dbReference type="ChEBI" id="CHEBI:28685"/>
    </ligandPart>
</feature>
<feature type="binding site" evidence="1">
    <location>
        <position position="827"/>
    </location>
    <ligand>
        <name>Mo-molybdopterin</name>
        <dbReference type="ChEBI" id="CHEBI:71302"/>
    </ligand>
    <ligandPart>
        <name>Mo</name>
        <dbReference type="ChEBI" id="CHEBI:28685"/>
    </ligandPart>
</feature>
<feature type="binding site" evidence="1">
    <location>
        <position position="831"/>
    </location>
    <ligand>
        <name>substrate</name>
    </ligand>
</feature>
<feature type="binding site" evidence="1">
    <location>
        <position position="909"/>
    </location>
    <ligand>
        <name>substrate</name>
    </ligand>
</feature>
<feature type="binding site" evidence="1">
    <location>
        <position position="941"/>
    </location>
    <ligand>
        <name>Mo-molybdopterin</name>
        <dbReference type="ChEBI" id="CHEBI:71302"/>
    </ligand>
    <ligandPart>
        <name>Mo</name>
        <dbReference type="ChEBI" id="CHEBI:28685"/>
    </ligandPart>
</feature>
<feature type="binding site" evidence="1">
    <location>
        <position position="943"/>
    </location>
    <ligand>
        <name>substrate</name>
    </ligand>
</feature>
<feature type="binding site" evidence="1">
    <location>
        <position position="1039"/>
    </location>
    <ligand>
        <name>substrate</name>
    </ligand>
</feature>
<feature type="binding site" evidence="1">
    <location>
        <position position="1108"/>
    </location>
    <ligand>
        <name>Mo-molybdopterin</name>
        <dbReference type="ChEBI" id="CHEBI:71302"/>
    </ligand>
    <ligandPart>
        <name>Mo</name>
        <dbReference type="ChEBI" id="CHEBI:28685"/>
    </ligandPart>
</feature>
<comment type="function">
    <text evidence="3">Key enzyme in purine degradation. Catalyzes the oxidation of hypoxanthine to xanthine. Catalyzes the oxidation of xanthine to uric acid. Contributes to the generation of reactive oxygen species.</text>
</comment>
<comment type="catalytic activity">
    <reaction evidence="6 7">
        <text>xanthine + NAD(+) + H2O = urate + NADH + H(+)</text>
        <dbReference type="Rhea" id="RHEA:16669"/>
        <dbReference type="ChEBI" id="CHEBI:15377"/>
        <dbReference type="ChEBI" id="CHEBI:15378"/>
        <dbReference type="ChEBI" id="CHEBI:17712"/>
        <dbReference type="ChEBI" id="CHEBI:17775"/>
        <dbReference type="ChEBI" id="CHEBI:57540"/>
        <dbReference type="ChEBI" id="CHEBI:57945"/>
        <dbReference type="EC" id="1.17.1.4"/>
    </reaction>
</comment>
<comment type="catalytic activity">
    <reaction evidence="6 7">
        <text>hypoxanthine + NAD(+) + H2O = xanthine + NADH + H(+)</text>
        <dbReference type="Rhea" id="RHEA:24670"/>
        <dbReference type="ChEBI" id="CHEBI:15377"/>
        <dbReference type="ChEBI" id="CHEBI:15378"/>
        <dbReference type="ChEBI" id="CHEBI:17368"/>
        <dbReference type="ChEBI" id="CHEBI:17712"/>
        <dbReference type="ChEBI" id="CHEBI:57540"/>
        <dbReference type="ChEBI" id="CHEBI:57945"/>
        <dbReference type="EC" id="1.17.1.4"/>
    </reaction>
</comment>
<comment type="catalytic activity">
    <reaction evidence="2">
        <text>xanthine + O2 + H2O = urate + H2O2</text>
        <dbReference type="Rhea" id="RHEA:21132"/>
        <dbReference type="ChEBI" id="CHEBI:15377"/>
        <dbReference type="ChEBI" id="CHEBI:15379"/>
        <dbReference type="ChEBI" id="CHEBI:16240"/>
        <dbReference type="ChEBI" id="CHEBI:17712"/>
        <dbReference type="ChEBI" id="CHEBI:17775"/>
        <dbReference type="EC" id="1.17.3.2"/>
    </reaction>
</comment>
<comment type="cofactor">
    <cofactor evidence="1">
        <name>FAD</name>
        <dbReference type="ChEBI" id="CHEBI:57692"/>
    </cofactor>
</comment>
<comment type="cofactor">
    <cofactor evidence="1">
        <name>Mo-molybdopterin</name>
        <dbReference type="ChEBI" id="CHEBI:71302"/>
    </cofactor>
    <text evidence="1">Binds 1 Mo-molybdopterin (Mo-MPT) cofactor per subunit.</text>
</comment>
<comment type="cofactor">
    <cofactor evidence="2">
        <name>[2Fe-2S] cluster</name>
        <dbReference type="ChEBI" id="CHEBI:190135"/>
    </cofactor>
    <text evidence="2">Binds 2 [2Fe-2S] clusters per subunit.</text>
</comment>
<comment type="subunit">
    <text evidence="1">Homodimer.</text>
</comment>
<comment type="subcellular location">
    <subcellularLocation>
        <location evidence="1">Peroxisome</location>
    </subcellularLocation>
    <subcellularLocation>
        <location evidence="6">Cytoplasm</location>
    </subcellularLocation>
</comment>
<comment type="tissue specificity">
    <text evidence="6">Detected in liver (at protein level).</text>
</comment>
<comment type="similarity">
    <text evidence="8">Belongs to the xanthine dehydrogenase family.</text>
</comment>
<sequence length="1358" mass="149614">MAPPETGDELVFFVNGKKVVEKDVDPETTLLTYLRRKLGLCGTKLGCGEGGCGACTVMISKYDPFQKKILHHTANACLFPICALHHVAVTTVEGIGNTKSRLHPAQERIAKSHGSQCGFCTPGIVMSMYTLLRNKPKPKMEDIEDAFQGNLCRCTGYRPILEGYRTFAVDSNCCGKAANGTGCCHSKGENSMNGGCCGGKANGPGCCMNEKENVTMMSSSLFDSSEFQPLDPTQEPIFPPELMTQRNKEQKQVCFKGERVMWIQPTTLQELVALKSQYPNAKLVVGNTEVGIEMRLKNMLYPVILAPAWIPEMNAVQQTETGITFGAACTLSSVEEVLRKAVAELPSYKTEIFQAALEQLRWFAGPQIRNVAALGGNIMTASPISDLNPVLMASGSKLTLISMEGKRTVMMDEKFFTGYRKTIVKPEEVLLSVEIPYSKEGEYFSAFKQAYRREDDIAIVTCGMRVLFQHGTSRVQEVKLSYGGMAPTTILALKTCRELAGRDWNEKLLQDACRLLAGEMDLSPSAPGGMVEFRRTLTLSFFFKFYLTVLQKLSKDQNGPNNLCEPVPPNYISATELFHKDPIASTQLFQEVPRGQLVEDTVGRPLVHLSAAKQACGEAVYCDDIPHYENELYLTLVTSTQAHAKILSIDASEAQSVPGFVCFVSAKDVPGSNITGIANDETVFAEDVVTCVGHIIGAVIADTQEHSRRAAKAVKIKYEELKPIVTIQEAIEQQSFIKPIKRIKKGDVNKGFEESDHILEGEMHIGGQEHFYLETHCTLAVPKGEDGEMELFVSTQNLMKTQEFTASALGVPSNRIVVRVKRMGGGFGGKETRNTILTTVVAVAAFKTGRPVRCMLDRDEDMLISGGRHPFLGRYKVGFMKNGKIKSLEVSYYSNGGNSADLSHGVMDRALLHLDNSYNIPNVSIMGFICKTNLSSNTAFRGFGGPQGMMIAECWMSDLARKCGLPPEEVRKINLYHEGDLTHFNQKLEGFTLRRCWDECLSSSNYHARKKLIEEFNKQNRWKKRGMCIIPTKFGISFTVPFLNQAGALVHVYTDGSVLLTHGGTEMGQGLHTKMIQVASRSLGIPTSKIYISETSTNTVPNTSPTAASVSADINGMAVHNACQTILKRLEPIKQSNLKGSWEDWIKTAYENCISLSATGFYRIPDVGYNFETNKGKPFHYFSYGVACSEVEIDCLTGDHKNIRTDIVMDVGTSLNPAIDIGQIEGAFVQGIGLFTMEELRYSPEGNLYTRGPGMYKIPAFGDIPTEFYVSLLRDCPNSKAIYSSKAVGEPPLFLSASVFYAIKDAIYSAREDSGVTEPFRLDSPATPERIRNACVDTFTKMCPSAEPGTFKPWSVRA</sequence>
<reference key="1">
    <citation type="journal article" date="1995" name="J. Biol. Chem.">
        <title>The structure of chicken liver xanthine dehydrogenase. cDNA cloning and the domain structure.</title>
        <authorList>
            <person name="Satoh A."/>
            <person name="Amaya Y."/>
            <person name="Noda K."/>
            <person name="Nishino T."/>
        </authorList>
    </citation>
    <scope>NUCLEOTIDE SEQUENCE [MRNA]</scope>
    <scope>PARTIAL PROTEIN SEQUENCE</scope>
    <scope>CATALYTIC ACTIVITY</scope>
    <source>
        <tissue>Liver</tissue>
    </source>
</reference>
<reference key="2">
    <citation type="journal article" date="1982" name="Biochem. J.">
        <title>Subcellular localization of chicken liver xanthine dehydrogenase. A possible source of cytoplasmic reducing equivalents.</title>
        <authorList>
            <person name="Coolbear K.P."/>
            <person name="Herzberg G.R."/>
            <person name="Brosnan J.T."/>
        </authorList>
    </citation>
    <scope>SUBCELLULAR LOCATION</scope>
    <scope>TISSUE SPECIFICITY</scope>
    <scope>CATALYTIC ACTIVITY</scope>
</reference>
<accession>P47990</accession>
<gene>
    <name type="primary">XDH</name>
</gene>
<name>XDH_CHICK</name>
<dbReference type="EC" id="1.17.1.4" evidence="6 7"/>
<dbReference type="EC" id="1.17.3.2" evidence="2"/>
<dbReference type="EMBL" id="D13221">
    <property type="protein sequence ID" value="BAA02502.1"/>
    <property type="molecule type" value="mRNA"/>
</dbReference>
<dbReference type="PIR" id="A55711">
    <property type="entry name" value="XOCHDH"/>
</dbReference>
<dbReference type="RefSeq" id="NP_990458.1">
    <property type="nucleotide sequence ID" value="NM_205127.1"/>
</dbReference>
<dbReference type="SMR" id="P47990"/>
<dbReference type="FunCoup" id="P47990">
    <property type="interactions" value="275"/>
</dbReference>
<dbReference type="STRING" id="9031.ENSGALP00000014144"/>
<dbReference type="PaxDb" id="9031-ENSGALP00000014144"/>
<dbReference type="GeneID" id="396025"/>
<dbReference type="KEGG" id="gga:396025"/>
<dbReference type="CTD" id="7498"/>
<dbReference type="VEuPathDB" id="HostDB:geneid_396025"/>
<dbReference type="eggNOG" id="KOG0430">
    <property type="taxonomic scope" value="Eukaryota"/>
</dbReference>
<dbReference type="InParanoid" id="P47990"/>
<dbReference type="OrthoDB" id="8300278at2759"/>
<dbReference type="PhylomeDB" id="P47990"/>
<dbReference type="Reactome" id="R-GGA-421178">
    <property type="pathway name" value="Urate synthesis"/>
</dbReference>
<dbReference type="PRO" id="PR:P47990"/>
<dbReference type="Proteomes" id="UP000000539">
    <property type="component" value="Unassembled WGS sequence"/>
</dbReference>
<dbReference type="GO" id="GO:0005829">
    <property type="term" value="C:cytosol"/>
    <property type="evidence" value="ECO:0000304"/>
    <property type="project" value="Reactome"/>
</dbReference>
<dbReference type="GO" id="GO:0005615">
    <property type="term" value="C:extracellular space"/>
    <property type="evidence" value="ECO:0000318"/>
    <property type="project" value="GO_Central"/>
</dbReference>
<dbReference type="GO" id="GO:0005777">
    <property type="term" value="C:peroxisome"/>
    <property type="evidence" value="ECO:0007669"/>
    <property type="project" value="UniProtKB-SubCell"/>
</dbReference>
<dbReference type="GO" id="GO:0051537">
    <property type="term" value="F:2 iron, 2 sulfur cluster binding"/>
    <property type="evidence" value="ECO:0000250"/>
    <property type="project" value="UniProtKB"/>
</dbReference>
<dbReference type="GO" id="GO:0071949">
    <property type="term" value="F:FAD binding"/>
    <property type="evidence" value="ECO:0007669"/>
    <property type="project" value="InterPro"/>
</dbReference>
<dbReference type="GO" id="GO:0050660">
    <property type="term" value="F:flavin adenine dinucleotide binding"/>
    <property type="evidence" value="ECO:0000250"/>
    <property type="project" value="UniProtKB"/>
</dbReference>
<dbReference type="GO" id="GO:0070674">
    <property type="term" value="F:hypoxanthine dehydrogenase activity"/>
    <property type="evidence" value="ECO:0000304"/>
    <property type="project" value="Reactome"/>
</dbReference>
<dbReference type="GO" id="GO:0005506">
    <property type="term" value="F:iron ion binding"/>
    <property type="evidence" value="ECO:0007669"/>
    <property type="project" value="InterPro"/>
</dbReference>
<dbReference type="GO" id="GO:0030151">
    <property type="term" value="F:molybdenum ion binding"/>
    <property type="evidence" value="ECO:0007669"/>
    <property type="project" value="InterPro"/>
</dbReference>
<dbReference type="GO" id="GO:0043546">
    <property type="term" value="F:molybdopterin cofactor binding"/>
    <property type="evidence" value="ECO:0000250"/>
    <property type="project" value="UniProtKB"/>
</dbReference>
<dbReference type="GO" id="GO:0004854">
    <property type="term" value="F:xanthine dehydrogenase activity"/>
    <property type="evidence" value="ECO:0000250"/>
    <property type="project" value="UniProtKB"/>
</dbReference>
<dbReference type="GO" id="GO:0004855">
    <property type="term" value="F:xanthine oxidase activity"/>
    <property type="evidence" value="ECO:0000250"/>
    <property type="project" value="UniProtKB"/>
</dbReference>
<dbReference type="GO" id="GO:0034418">
    <property type="term" value="P:urate biosynthetic process"/>
    <property type="evidence" value="ECO:0000304"/>
    <property type="project" value="Reactome"/>
</dbReference>
<dbReference type="GO" id="GO:0009115">
    <property type="term" value="P:xanthine catabolic process"/>
    <property type="evidence" value="ECO:0000250"/>
    <property type="project" value="UniProtKB"/>
</dbReference>
<dbReference type="FunFam" id="1.10.150.120:FF:000001">
    <property type="entry name" value="Aldehyde oxidase 1"/>
    <property type="match status" value="1"/>
</dbReference>
<dbReference type="FunFam" id="3.10.20.30:FF:000015">
    <property type="entry name" value="Aldehyde oxidase 1"/>
    <property type="match status" value="1"/>
</dbReference>
<dbReference type="FunFam" id="3.30.365.10:FF:000003">
    <property type="entry name" value="Aldehyde oxidase 1"/>
    <property type="match status" value="1"/>
</dbReference>
<dbReference type="FunFam" id="3.30.365.10:FF:000001">
    <property type="entry name" value="Xanthine dehydrogenase oxidase"/>
    <property type="match status" value="1"/>
</dbReference>
<dbReference type="FunFam" id="3.30.365.10:FF:000004">
    <property type="entry name" value="Xanthine dehydrogenase oxidase"/>
    <property type="match status" value="1"/>
</dbReference>
<dbReference type="FunFam" id="3.30.390.50:FF:000001">
    <property type="entry name" value="Xanthine dehydrogenase oxidase"/>
    <property type="match status" value="1"/>
</dbReference>
<dbReference type="FunFam" id="3.30.43.10:FF:000001">
    <property type="entry name" value="Xanthine dehydrogenase/oxidase"/>
    <property type="match status" value="1"/>
</dbReference>
<dbReference type="FunFam" id="3.30.465.10:FF:000004">
    <property type="entry name" value="Xanthine dehydrogenase/oxidase"/>
    <property type="match status" value="1"/>
</dbReference>
<dbReference type="FunFam" id="3.90.1170.50:FF:000002">
    <property type="entry name" value="Xanthine dehydrogenase/oxidase"/>
    <property type="match status" value="1"/>
</dbReference>
<dbReference type="Gene3D" id="3.10.20.30">
    <property type="match status" value="1"/>
</dbReference>
<dbReference type="Gene3D" id="3.30.465.10">
    <property type="match status" value="1"/>
</dbReference>
<dbReference type="Gene3D" id="1.10.150.120">
    <property type="entry name" value="[2Fe-2S]-binding domain"/>
    <property type="match status" value="1"/>
</dbReference>
<dbReference type="Gene3D" id="3.90.1170.50">
    <property type="entry name" value="Aldehyde oxidase/xanthine dehydrogenase, a/b hammerhead"/>
    <property type="match status" value="1"/>
</dbReference>
<dbReference type="Gene3D" id="3.30.365.10">
    <property type="entry name" value="Aldehyde oxidase/xanthine dehydrogenase, molybdopterin binding domain"/>
    <property type="match status" value="5"/>
</dbReference>
<dbReference type="Gene3D" id="3.30.390.50">
    <property type="entry name" value="CO dehydrogenase flavoprotein, C-terminal domain"/>
    <property type="match status" value="1"/>
</dbReference>
<dbReference type="Gene3D" id="3.30.43.10">
    <property type="entry name" value="Uridine Diphospho-n-acetylenolpyruvylglucosamine Reductase, domain 2"/>
    <property type="match status" value="1"/>
</dbReference>
<dbReference type="InterPro" id="IPR002888">
    <property type="entry name" value="2Fe-2S-bd"/>
</dbReference>
<dbReference type="InterPro" id="IPR036884">
    <property type="entry name" value="2Fe-2S-bd_dom_sf"/>
</dbReference>
<dbReference type="InterPro" id="IPR036010">
    <property type="entry name" value="2Fe-2S_ferredoxin-like_sf"/>
</dbReference>
<dbReference type="InterPro" id="IPR001041">
    <property type="entry name" value="2Fe-2S_ferredoxin-type"/>
</dbReference>
<dbReference type="InterPro" id="IPR006058">
    <property type="entry name" value="2Fe2S_fd_BS"/>
</dbReference>
<dbReference type="InterPro" id="IPR000674">
    <property type="entry name" value="Ald_Oxase/Xan_DH_a/b"/>
</dbReference>
<dbReference type="InterPro" id="IPR036856">
    <property type="entry name" value="Ald_Oxase/Xan_DH_a/b_sf"/>
</dbReference>
<dbReference type="InterPro" id="IPR016208">
    <property type="entry name" value="Ald_Oxase/xanthine_DH-like"/>
</dbReference>
<dbReference type="InterPro" id="IPR008274">
    <property type="entry name" value="AldOxase/xan_DH_MoCoBD1"/>
</dbReference>
<dbReference type="InterPro" id="IPR046867">
    <property type="entry name" value="AldOxase/xan_DH_MoCoBD2"/>
</dbReference>
<dbReference type="InterPro" id="IPR037165">
    <property type="entry name" value="AldOxase/xan_DH_Mopterin-bd_sf"/>
</dbReference>
<dbReference type="InterPro" id="IPR012675">
    <property type="entry name" value="Beta-grasp_dom_sf"/>
</dbReference>
<dbReference type="InterPro" id="IPR005107">
    <property type="entry name" value="CO_DH_flav_C"/>
</dbReference>
<dbReference type="InterPro" id="IPR036683">
    <property type="entry name" value="CO_DH_flav_C_dom_sf"/>
</dbReference>
<dbReference type="InterPro" id="IPR016166">
    <property type="entry name" value="FAD-bd_PCMH"/>
</dbReference>
<dbReference type="InterPro" id="IPR036318">
    <property type="entry name" value="FAD-bd_PCMH-like_sf"/>
</dbReference>
<dbReference type="InterPro" id="IPR016167">
    <property type="entry name" value="FAD-bd_PCMH_sub1"/>
</dbReference>
<dbReference type="InterPro" id="IPR016169">
    <property type="entry name" value="FAD-bd_PCMH_sub2"/>
</dbReference>
<dbReference type="InterPro" id="IPR002346">
    <property type="entry name" value="Mopterin_DH_FAD-bd"/>
</dbReference>
<dbReference type="InterPro" id="IPR022407">
    <property type="entry name" value="OxRdtase_Mopterin_BS"/>
</dbReference>
<dbReference type="InterPro" id="IPR014309">
    <property type="entry name" value="Xanthine_DH_Mopterin-bd_su"/>
</dbReference>
<dbReference type="InterPro" id="IPR014307">
    <property type="entry name" value="Xanthine_DH_ssu"/>
</dbReference>
<dbReference type="NCBIfam" id="TIGR02963">
    <property type="entry name" value="xanthine_xdhA"/>
    <property type="match status" value="1"/>
</dbReference>
<dbReference type="NCBIfam" id="TIGR02965">
    <property type="entry name" value="xanthine_xdhB"/>
    <property type="match status" value="1"/>
</dbReference>
<dbReference type="PANTHER" id="PTHR45444">
    <property type="entry name" value="XANTHINE DEHYDROGENASE"/>
    <property type="match status" value="1"/>
</dbReference>
<dbReference type="PANTHER" id="PTHR45444:SF3">
    <property type="entry name" value="XANTHINE DEHYDROGENASE"/>
    <property type="match status" value="1"/>
</dbReference>
<dbReference type="Pfam" id="PF01315">
    <property type="entry name" value="Ald_Xan_dh_C"/>
    <property type="match status" value="1"/>
</dbReference>
<dbReference type="Pfam" id="PF03450">
    <property type="entry name" value="CO_deh_flav_C"/>
    <property type="match status" value="1"/>
</dbReference>
<dbReference type="Pfam" id="PF00941">
    <property type="entry name" value="FAD_binding_5"/>
    <property type="match status" value="1"/>
</dbReference>
<dbReference type="Pfam" id="PF00111">
    <property type="entry name" value="Fer2"/>
    <property type="match status" value="1"/>
</dbReference>
<dbReference type="Pfam" id="PF01799">
    <property type="entry name" value="Fer2_2"/>
    <property type="match status" value="1"/>
</dbReference>
<dbReference type="Pfam" id="PF02738">
    <property type="entry name" value="MoCoBD_1"/>
    <property type="match status" value="1"/>
</dbReference>
<dbReference type="Pfam" id="PF20256">
    <property type="entry name" value="MoCoBD_2"/>
    <property type="match status" value="1"/>
</dbReference>
<dbReference type="PIRSF" id="PIRSF000127">
    <property type="entry name" value="Xanthine_DH"/>
    <property type="match status" value="1"/>
</dbReference>
<dbReference type="SMART" id="SM01008">
    <property type="entry name" value="Ald_Xan_dh_C"/>
    <property type="match status" value="1"/>
</dbReference>
<dbReference type="SMART" id="SM01092">
    <property type="entry name" value="CO_deh_flav_C"/>
    <property type="match status" value="1"/>
</dbReference>
<dbReference type="SUPFAM" id="SSF54292">
    <property type="entry name" value="2Fe-2S ferredoxin-like"/>
    <property type="match status" value="1"/>
</dbReference>
<dbReference type="SUPFAM" id="SSF55447">
    <property type="entry name" value="CO dehydrogenase flavoprotein C-terminal domain-like"/>
    <property type="match status" value="1"/>
</dbReference>
<dbReference type="SUPFAM" id="SSF47741">
    <property type="entry name" value="CO dehydrogenase ISP C-domain like"/>
    <property type="match status" value="1"/>
</dbReference>
<dbReference type="SUPFAM" id="SSF54665">
    <property type="entry name" value="CO dehydrogenase molybdoprotein N-domain-like"/>
    <property type="match status" value="1"/>
</dbReference>
<dbReference type="SUPFAM" id="SSF56176">
    <property type="entry name" value="FAD-binding/transporter-associated domain-like"/>
    <property type="match status" value="1"/>
</dbReference>
<dbReference type="SUPFAM" id="SSF56003">
    <property type="entry name" value="Molybdenum cofactor-binding domain"/>
    <property type="match status" value="1"/>
</dbReference>
<dbReference type="PROSITE" id="PS00197">
    <property type="entry name" value="2FE2S_FER_1"/>
    <property type="match status" value="1"/>
</dbReference>
<dbReference type="PROSITE" id="PS51085">
    <property type="entry name" value="2FE2S_FER_2"/>
    <property type="match status" value="1"/>
</dbReference>
<dbReference type="PROSITE" id="PS51387">
    <property type="entry name" value="FAD_PCMH"/>
    <property type="match status" value="1"/>
</dbReference>
<dbReference type="PROSITE" id="PS00559">
    <property type="entry name" value="MOLYBDOPTERIN_EUK"/>
    <property type="match status" value="1"/>
</dbReference>
<organism>
    <name type="scientific">Gallus gallus</name>
    <name type="common">Chicken</name>
    <dbReference type="NCBI Taxonomy" id="9031"/>
    <lineage>
        <taxon>Eukaryota</taxon>
        <taxon>Metazoa</taxon>
        <taxon>Chordata</taxon>
        <taxon>Craniata</taxon>
        <taxon>Vertebrata</taxon>
        <taxon>Euteleostomi</taxon>
        <taxon>Archelosauria</taxon>
        <taxon>Archosauria</taxon>
        <taxon>Dinosauria</taxon>
        <taxon>Saurischia</taxon>
        <taxon>Theropoda</taxon>
        <taxon>Coelurosauria</taxon>
        <taxon>Aves</taxon>
        <taxon>Neognathae</taxon>
        <taxon>Galloanserae</taxon>
        <taxon>Galliformes</taxon>
        <taxon>Phasianidae</taxon>
        <taxon>Phasianinae</taxon>
        <taxon>Gallus</taxon>
    </lineage>
</organism>
<evidence type="ECO:0000250" key="1"/>
<evidence type="ECO:0000250" key="2">
    <source>
        <dbReference type="UniProtKB" id="P22985"/>
    </source>
</evidence>
<evidence type="ECO:0000250" key="3">
    <source>
        <dbReference type="UniProtKB" id="P47989"/>
    </source>
</evidence>
<evidence type="ECO:0000255" key="4">
    <source>
        <dbReference type="PROSITE-ProRule" id="PRU00465"/>
    </source>
</evidence>
<evidence type="ECO:0000255" key="5">
    <source>
        <dbReference type="PROSITE-ProRule" id="PRU00718"/>
    </source>
</evidence>
<evidence type="ECO:0000269" key="6">
    <source>
    </source>
</evidence>
<evidence type="ECO:0000269" key="7">
    <source>
    </source>
</evidence>
<evidence type="ECO:0000305" key="8"/>
<protein>
    <recommendedName>
        <fullName>Xanthine dehydrogenase/oxidase</fullName>
    </recommendedName>
    <domain>
        <recommendedName>
            <fullName>Xanthine dehydrogenase</fullName>
            <shortName>XD</shortName>
            <ecNumber evidence="6 7">1.17.1.4</ecNumber>
        </recommendedName>
    </domain>
    <domain>
        <recommendedName>
            <fullName>Xanthine oxidase</fullName>
            <shortName>XO</shortName>
            <ecNumber evidence="2">1.17.3.2</ecNumber>
        </recommendedName>
        <alternativeName>
            <fullName>Xanthine oxidoreductase</fullName>
            <shortName>XOR</shortName>
        </alternativeName>
    </domain>
</protein>
<proteinExistence type="evidence at protein level"/>